<proteinExistence type="inferred from homology"/>
<sequence>MDKKTIYFICTGNSCRSQMAEGWGKEILGEDWNVYSAGIETHGVNPRAIEAMKEVDIDISNHTSDLIDNDILKQSDLVVTLCSDADDNCPILPPNVKKEHWGFEDPAGKEWSEFQRVRDEIKLAIEKFKLR</sequence>
<accession>Q49WS7</accession>
<dbReference type="EC" id="1.20.4.4" evidence="1"/>
<dbReference type="EMBL" id="AP008934">
    <property type="protein sequence ID" value="BAE18778.1"/>
    <property type="molecule type" value="Genomic_DNA"/>
</dbReference>
<dbReference type="RefSeq" id="WP_011303368.1">
    <property type="nucleotide sequence ID" value="NC_007350.1"/>
</dbReference>
<dbReference type="BMRB" id="Q49WS7"/>
<dbReference type="SMR" id="Q49WS7"/>
<dbReference type="GeneID" id="3615240"/>
<dbReference type="KEGG" id="ssp:SSP1633"/>
<dbReference type="PATRIC" id="fig|342451.11.peg.1633"/>
<dbReference type="eggNOG" id="COG0394">
    <property type="taxonomic scope" value="Bacteria"/>
</dbReference>
<dbReference type="HOGENOM" id="CLU_071415_3_2_9"/>
<dbReference type="OrthoDB" id="9784339at2"/>
<dbReference type="Proteomes" id="UP000006371">
    <property type="component" value="Chromosome"/>
</dbReference>
<dbReference type="GO" id="GO:0005737">
    <property type="term" value="C:cytoplasm"/>
    <property type="evidence" value="ECO:0007669"/>
    <property type="project" value="UniProtKB-SubCell"/>
</dbReference>
<dbReference type="GO" id="GO:0030612">
    <property type="term" value="F:arsenate reductase (thioredoxin) activity"/>
    <property type="evidence" value="ECO:0007669"/>
    <property type="project" value="UniProtKB-UniRule"/>
</dbReference>
<dbReference type="GO" id="GO:0004725">
    <property type="term" value="F:protein tyrosine phosphatase activity"/>
    <property type="evidence" value="ECO:0007669"/>
    <property type="project" value="InterPro"/>
</dbReference>
<dbReference type="GO" id="GO:0046685">
    <property type="term" value="P:response to arsenic-containing substance"/>
    <property type="evidence" value="ECO:0007669"/>
    <property type="project" value="UniProtKB-KW"/>
</dbReference>
<dbReference type="CDD" id="cd16345">
    <property type="entry name" value="LMWP_ArsC"/>
    <property type="match status" value="1"/>
</dbReference>
<dbReference type="FunFam" id="3.40.50.2300:FF:000237">
    <property type="entry name" value="Arsenate reductase"/>
    <property type="match status" value="1"/>
</dbReference>
<dbReference type="Gene3D" id="3.40.50.2300">
    <property type="match status" value="1"/>
</dbReference>
<dbReference type="HAMAP" id="MF_01624">
    <property type="entry name" value="Arsenate_reduct"/>
    <property type="match status" value="1"/>
</dbReference>
<dbReference type="InterPro" id="IPR014064">
    <property type="entry name" value="Arsenate_reductase_ArsC"/>
</dbReference>
<dbReference type="InterPro" id="IPR023485">
    <property type="entry name" value="Ptyr_pPase"/>
</dbReference>
<dbReference type="InterPro" id="IPR036196">
    <property type="entry name" value="Ptyr_pPase_sf"/>
</dbReference>
<dbReference type="NCBIfam" id="TIGR02691">
    <property type="entry name" value="arsC_pI258_fam"/>
    <property type="match status" value="1"/>
</dbReference>
<dbReference type="NCBIfam" id="NF010053">
    <property type="entry name" value="PRK13530.1"/>
    <property type="match status" value="1"/>
</dbReference>
<dbReference type="PANTHER" id="PTHR43428">
    <property type="entry name" value="ARSENATE REDUCTASE"/>
    <property type="match status" value="1"/>
</dbReference>
<dbReference type="PANTHER" id="PTHR43428:SF1">
    <property type="entry name" value="ARSENATE REDUCTASE"/>
    <property type="match status" value="1"/>
</dbReference>
<dbReference type="Pfam" id="PF01451">
    <property type="entry name" value="LMWPc"/>
    <property type="match status" value="1"/>
</dbReference>
<dbReference type="SMART" id="SM00226">
    <property type="entry name" value="LMWPc"/>
    <property type="match status" value="1"/>
</dbReference>
<dbReference type="SUPFAM" id="SSF52788">
    <property type="entry name" value="Phosphotyrosine protein phosphatases I"/>
    <property type="match status" value="1"/>
</dbReference>
<feature type="chain" id="PRO_0000162532" description="Arsenate reductase 1">
    <location>
        <begin position="1"/>
        <end position="131"/>
    </location>
</feature>
<feature type="active site" description="Nucleophile" evidence="1">
    <location>
        <position position="10"/>
    </location>
</feature>
<feature type="active site" description="Nucleophile" evidence="1">
    <location>
        <position position="82"/>
    </location>
</feature>
<feature type="active site" description="Nucleophile" evidence="1">
    <location>
        <position position="89"/>
    </location>
</feature>
<feature type="disulfide bond" description="Redox-active; alternate" evidence="1">
    <location>
        <begin position="10"/>
        <end position="82"/>
    </location>
</feature>
<feature type="disulfide bond" description="Redox-active; alternate" evidence="1">
    <location>
        <begin position="82"/>
        <end position="89"/>
    </location>
</feature>
<organism>
    <name type="scientific">Staphylococcus saprophyticus subsp. saprophyticus (strain ATCC 15305 / DSM 20229 / NCIMB 8711 / NCTC 7292 / S-41)</name>
    <dbReference type="NCBI Taxonomy" id="342451"/>
    <lineage>
        <taxon>Bacteria</taxon>
        <taxon>Bacillati</taxon>
        <taxon>Bacillota</taxon>
        <taxon>Bacilli</taxon>
        <taxon>Bacillales</taxon>
        <taxon>Staphylococcaceae</taxon>
        <taxon>Staphylococcus</taxon>
    </lineage>
</organism>
<gene>
    <name evidence="1" type="primary">arsC1</name>
    <name type="ordered locus">SSP1633</name>
</gene>
<evidence type="ECO:0000255" key="1">
    <source>
        <dbReference type="HAMAP-Rule" id="MF_01624"/>
    </source>
</evidence>
<protein>
    <recommendedName>
        <fullName evidence="1">Arsenate reductase 1</fullName>
        <ecNumber evidence="1">1.20.4.4</ecNumber>
    </recommendedName>
</protein>
<keyword id="KW-0059">Arsenical resistance</keyword>
<keyword id="KW-0963">Cytoplasm</keyword>
<keyword id="KW-1015">Disulfide bond</keyword>
<keyword id="KW-0560">Oxidoreductase</keyword>
<keyword id="KW-0676">Redox-active center</keyword>
<keyword id="KW-1185">Reference proteome</keyword>
<comment type="function">
    <text evidence="1">Catalyzes the reduction of arsenate [As(V)] to arsenite [As(III)].</text>
</comment>
<comment type="catalytic activity">
    <reaction evidence="1">
        <text>arsenate + [thioredoxin]-dithiol + H(+) = arsenite + [thioredoxin]-disulfide + H2O</text>
        <dbReference type="Rhea" id="RHEA:43848"/>
        <dbReference type="Rhea" id="RHEA-COMP:10698"/>
        <dbReference type="Rhea" id="RHEA-COMP:10700"/>
        <dbReference type="ChEBI" id="CHEBI:15377"/>
        <dbReference type="ChEBI" id="CHEBI:15378"/>
        <dbReference type="ChEBI" id="CHEBI:29242"/>
        <dbReference type="ChEBI" id="CHEBI:29950"/>
        <dbReference type="ChEBI" id="CHEBI:48597"/>
        <dbReference type="ChEBI" id="CHEBI:50058"/>
        <dbReference type="EC" id="1.20.4.4"/>
    </reaction>
</comment>
<comment type="subcellular location">
    <subcellularLocation>
        <location evidence="1">Cytoplasm</location>
    </subcellularLocation>
</comment>
<comment type="similarity">
    <text evidence="1">Belongs to the low molecular weight phosphotyrosine protein phosphatase family. Thioredoxin-coupled ArsC subfamily.</text>
</comment>
<reference key="1">
    <citation type="journal article" date="2005" name="Proc. Natl. Acad. Sci. U.S.A.">
        <title>Whole genome sequence of Staphylococcus saprophyticus reveals the pathogenesis of uncomplicated urinary tract infection.</title>
        <authorList>
            <person name="Kuroda M."/>
            <person name="Yamashita A."/>
            <person name="Hirakawa H."/>
            <person name="Kumano M."/>
            <person name="Morikawa K."/>
            <person name="Higashide M."/>
            <person name="Maruyama A."/>
            <person name="Inose Y."/>
            <person name="Matoba K."/>
            <person name="Toh H."/>
            <person name="Kuhara S."/>
            <person name="Hattori M."/>
            <person name="Ohta T."/>
        </authorList>
    </citation>
    <scope>NUCLEOTIDE SEQUENCE [LARGE SCALE GENOMIC DNA]</scope>
    <source>
        <strain>ATCC 15305 / DSM 20229 / NCIMB 8711 / NCTC 7292 / S-41</strain>
    </source>
</reference>
<name>ARSC1_STAS1</name>